<gene>
    <name evidence="1" type="primary">pyrE</name>
    <name type="ordered locus">SDY_4073</name>
</gene>
<dbReference type="EC" id="2.4.2.10" evidence="1"/>
<dbReference type="EMBL" id="CP000034">
    <property type="protein sequence ID" value="ABB63991.1"/>
    <property type="molecule type" value="Genomic_DNA"/>
</dbReference>
<dbReference type="RefSeq" id="WP_000806179.1">
    <property type="nucleotide sequence ID" value="NC_007606.1"/>
</dbReference>
<dbReference type="RefSeq" id="YP_405482.1">
    <property type="nucleotide sequence ID" value="NC_007606.1"/>
</dbReference>
<dbReference type="SMR" id="Q329L4"/>
<dbReference type="STRING" id="300267.SDY_4073"/>
<dbReference type="EnsemblBacteria" id="ABB63991">
    <property type="protein sequence ID" value="ABB63991"/>
    <property type="gene ID" value="SDY_4073"/>
</dbReference>
<dbReference type="KEGG" id="sdy:SDY_4073"/>
<dbReference type="PATRIC" id="fig|300267.13.peg.4792"/>
<dbReference type="HOGENOM" id="CLU_074878_0_1_6"/>
<dbReference type="UniPathway" id="UPA00070">
    <property type="reaction ID" value="UER00119"/>
</dbReference>
<dbReference type="Proteomes" id="UP000002716">
    <property type="component" value="Chromosome"/>
</dbReference>
<dbReference type="GO" id="GO:0005737">
    <property type="term" value="C:cytoplasm"/>
    <property type="evidence" value="ECO:0007669"/>
    <property type="project" value="TreeGrafter"/>
</dbReference>
<dbReference type="GO" id="GO:0000287">
    <property type="term" value="F:magnesium ion binding"/>
    <property type="evidence" value="ECO:0007669"/>
    <property type="project" value="UniProtKB-UniRule"/>
</dbReference>
<dbReference type="GO" id="GO:0004588">
    <property type="term" value="F:orotate phosphoribosyltransferase activity"/>
    <property type="evidence" value="ECO:0007669"/>
    <property type="project" value="UniProtKB-UniRule"/>
</dbReference>
<dbReference type="GO" id="GO:0006207">
    <property type="term" value="P:'de novo' pyrimidine nucleobase biosynthetic process"/>
    <property type="evidence" value="ECO:0007669"/>
    <property type="project" value="TreeGrafter"/>
</dbReference>
<dbReference type="GO" id="GO:0044205">
    <property type="term" value="P:'de novo' UMP biosynthetic process"/>
    <property type="evidence" value="ECO:0007669"/>
    <property type="project" value="UniProtKB-UniRule"/>
</dbReference>
<dbReference type="GO" id="GO:0046132">
    <property type="term" value="P:pyrimidine ribonucleoside biosynthetic process"/>
    <property type="evidence" value="ECO:0007669"/>
    <property type="project" value="TreeGrafter"/>
</dbReference>
<dbReference type="CDD" id="cd06223">
    <property type="entry name" value="PRTases_typeI"/>
    <property type="match status" value="1"/>
</dbReference>
<dbReference type="FunFam" id="3.40.50.2020:FF:000008">
    <property type="entry name" value="Orotate phosphoribosyltransferase"/>
    <property type="match status" value="1"/>
</dbReference>
<dbReference type="Gene3D" id="3.40.50.2020">
    <property type="match status" value="1"/>
</dbReference>
<dbReference type="HAMAP" id="MF_01208">
    <property type="entry name" value="PyrE"/>
    <property type="match status" value="1"/>
</dbReference>
<dbReference type="InterPro" id="IPR023031">
    <property type="entry name" value="OPRT"/>
</dbReference>
<dbReference type="InterPro" id="IPR004467">
    <property type="entry name" value="Or_phspho_trans_dom"/>
</dbReference>
<dbReference type="InterPro" id="IPR000836">
    <property type="entry name" value="PRibTrfase_dom"/>
</dbReference>
<dbReference type="InterPro" id="IPR029057">
    <property type="entry name" value="PRTase-like"/>
</dbReference>
<dbReference type="NCBIfam" id="TIGR00336">
    <property type="entry name" value="pyrE"/>
    <property type="match status" value="1"/>
</dbReference>
<dbReference type="PANTHER" id="PTHR46683">
    <property type="entry name" value="OROTATE PHOSPHORIBOSYLTRANSFERASE 1-RELATED"/>
    <property type="match status" value="1"/>
</dbReference>
<dbReference type="PANTHER" id="PTHR46683:SF1">
    <property type="entry name" value="OROTATE PHOSPHORIBOSYLTRANSFERASE 1-RELATED"/>
    <property type="match status" value="1"/>
</dbReference>
<dbReference type="Pfam" id="PF00156">
    <property type="entry name" value="Pribosyltran"/>
    <property type="match status" value="1"/>
</dbReference>
<dbReference type="SUPFAM" id="SSF53271">
    <property type="entry name" value="PRTase-like"/>
    <property type="match status" value="1"/>
</dbReference>
<dbReference type="PROSITE" id="PS00103">
    <property type="entry name" value="PUR_PYR_PR_TRANSFER"/>
    <property type="match status" value="1"/>
</dbReference>
<accession>Q329L4</accession>
<reference key="1">
    <citation type="journal article" date="2005" name="Nucleic Acids Res.">
        <title>Genome dynamics and diversity of Shigella species, the etiologic agents of bacillary dysentery.</title>
        <authorList>
            <person name="Yang F."/>
            <person name="Yang J."/>
            <person name="Zhang X."/>
            <person name="Chen L."/>
            <person name="Jiang Y."/>
            <person name="Yan Y."/>
            <person name="Tang X."/>
            <person name="Wang J."/>
            <person name="Xiong Z."/>
            <person name="Dong J."/>
            <person name="Xue Y."/>
            <person name="Zhu Y."/>
            <person name="Xu X."/>
            <person name="Sun L."/>
            <person name="Chen S."/>
            <person name="Nie H."/>
            <person name="Peng J."/>
            <person name="Xu J."/>
            <person name="Wang Y."/>
            <person name="Yuan Z."/>
            <person name="Wen Y."/>
            <person name="Yao Z."/>
            <person name="Shen Y."/>
            <person name="Qiang B."/>
            <person name="Hou Y."/>
            <person name="Yu J."/>
            <person name="Jin Q."/>
        </authorList>
    </citation>
    <scope>NUCLEOTIDE SEQUENCE [LARGE SCALE GENOMIC DNA]</scope>
    <source>
        <strain>Sd197</strain>
    </source>
</reference>
<evidence type="ECO:0000255" key="1">
    <source>
        <dbReference type="HAMAP-Rule" id="MF_01208"/>
    </source>
</evidence>
<comment type="function">
    <text evidence="1">Catalyzes the transfer of a ribosyl phosphate group from 5-phosphoribose 1-diphosphate to orotate, leading to the formation of orotidine monophosphate (OMP).</text>
</comment>
<comment type="catalytic activity">
    <reaction evidence="1">
        <text>orotidine 5'-phosphate + diphosphate = orotate + 5-phospho-alpha-D-ribose 1-diphosphate</text>
        <dbReference type="Rhea" id="RHEA:10380"/>
        <dbReference type="ChEBI" id="CHEBI:30839"/>
        <dbReference type="ChEBI" id="CHEBI:33019"/>
        <dbReference type="ChEBI" id="CHEBI:57538"/>
        <dbReference type="ChEBI" id="CHEBI:58017"/>
        <dbReference type="EC" id="2.4.2.10"/>
    </reaction>
</comment>
<comment type="cofactor">
    <cofactor evidence="1">
        <name>Mg(2+)</name>
        <dbReference type="ChEBI" id="CHEBI:18420"/>
    </cofactor>
</comment>
<comment type="pathway">
    <text evidence="1">Pyrimidine metabolism; UMP biosynthesis via de novo pathway; UMP from orotate: step 1/2.</text>
</comment>
<comment type="subunit">
    <text evidence="1">Homodimer.</text>
</comment>
<comment type="similarity">
    <text evidence="1">Belongs to the purine/pyrimidine phosphoribosyltransferase family. PyrE subfamily.</text>
</comment>
<proteinExistence type="inferred from homology"/>
<name>PYRE_SHIDS</name>
<protein>
    <recommendedName>
        <fullName evidence="1">Orotate phosphoribosyltransferase</fullName>
        <shortName evidence="1">OPRT</shortName>
        <shortName evidence="1">OPRTase</shortName>
        <ecNumber evidence="1">2.4.2.10</ecNumber>
    </recommendedName>
</protein>
<feature type="chain" id="PRO_1000066296" description="Orotate phosphoribosyltransferase">
    <location>
        <begin position="1"/>
        <end position="213"/>
    </location>
</feature>
<feature type="binding site" description="in other chain" evidence="1">
    <location>
        <position position="26"/>
    </location>
    <ligand>
        <name>5-phospho-alpha-D-ribose 1-diphosphate</name>
        <dbReference type="ChEBI" id="CHEBI:58017"/>
        <note>ligand shared between dimeric partners</note>
    </ligand>
</feature>
<feature type="binding site" evidence="1">
    <location>
        <begin position="34"/>
        <end position="35"/>
    </location>
    <ligand>
        <name>orotate</name>
        <dbReference type="ChEBI" id="CHEBI:30839"/>
    </ligand>
</feature>
<feature type="binding site" description="in other chain" evidence="1">
    <location>
        <begin position="72"/>
        <end position="73"/>
    </location>
    <ligand>
        <name>5-phospho-alpha-D-ribose 1-diphosphate</name>
        <dbReference type="ChEBI" id="CHEBI:58017"/>
        <note>ligand shared between dimeric partners</note>
    </ligand>
</feature>
<feature type="binding site" evidence="1">
    <location>
        <position position="99"/>
    </location>
    <ligand>
        <name>5-phospho-alpha-D-ribose 1-diphosphate</name>
        <dbReference type="ChEBI" id="CHEBI:58017"/>
        <note>ligand shared between dimeric partners</note>
    </ligand>
</feature>
<feature type="binding site" description="in other chain" evidence="1">
    <location>
        <position position="100"/>
    </location>
    <ligand>
        <name>5-phospho-alpha-D-ribose 1-diphosphate</name>
        <dbReference type="ChEBI" id="CHEBI:58017"/>
        <note>ligand shared between dimeric partners</note>
    </ligand>
</feature>
<feature type="binding site" evidence="1">
    <location>
        <position position="103"/>
    </location>
    <ligand>
        <name>5-phospho-alpha-D-ribose 1-diphosphate</name>
        <dbReference type="ChEBI" id="CHEBI:58017"/>
        <note>ligand shared between dimeric partners</note>
    </ligand>
</feature>
<feature type="binding site" evidence="1">
    <location>
        <position position="105"/>
    </location>
    <ligand>
        <name>5-phospho-alpha-D-ribose 1-diphosphate</name>
        <dbReference type="ChEBI" id="CHEBI:58017"/>
        <note>ligand shared between dimeric partners</note>
    </ligand>
</feature>
<feature type="binding site" description="in other chain" evidence="1">
    <location>
        <begin position="124"/>
        <end position="132"/>
    </location>
    <ligand>
        <name>5-phospho-alpha-D-ribose 1-diphosphate</name>
        <dbReference type="ChEBI" id="CHEBI:58017"/>
        <note>ligand shared between dimeric partners</note>
    </ligand>
</feature>
<feature type="binding site" evidence="1">
    <location>
        <position position="128"/>
    </location>
    <ligand>
        <name>orotate</name>
        <dbReference type="ChEBI" id="CHEBI:30839"/>
    </ligand>
</feature>
<feature type="binding site" evidence="1">
    <location>
        <position position="156"/>
    </location>
    <ligand>
        <name>orotate</name>
        <dbReference type="ChEBI" id="CHEBI:30839"/>
    </ligand>
</feature>
<keyword id="KW-0328">Glycosyltransferase</keyword>
<keyword id="KW-0460">Magnesium</keyword>
<keyword id="KW-0665">Pyrimidine biosynthesis</keyword>
<keyword id="KW-1185">Reference proteome</keyword>
<keyword id="KW-0808">Transferase</keyword>
<sequence length="213" mass="23495">MKPYQRQFIEFALSKQVLKFGEFTLKSGRKSPYFFNAGLFNTGRDLALLGRFYAEALVDSGIEFDLLFGPAYKGIPIATTTAVALAEHHDLDLPYCFNRKEAKDHGEGGNLVGSALQGRVMLVDDVITAGTAIRESMEIIQANGATLAGVLISLDRQERGRGEISAIQEVERDYNCKVISIITLKDLIAYLEGKPEMAEHLAAVKAYREEFGV</sequence>
<organism>
    <name type="scientific">Shigella dysenteriae serotype 1 (strain Sd197)</name>
    <dbReference type="NCBI Taxonomy" id="300267"/>
    <lineage>
        <taxon>Bacteria</taxon>
        <taxon>Pseudomonadati</taxon>
        <taxon>Pseudomonadota</taxon>
        <taxon>Gammaproteobacteria</taxon>
        <taxon>Enterobacterales</taxon>
        <taxon>Enterobacteriaceae</taxon>
        <taxon>Shigella</taxon>
    </lineage>
</organism>